<protein>
    <recommendedName>
        <fullName evidence="1">Pantothenate synthetase</fullName>
        <shortName evidence="1">PS</shortName>
        <ecNumber evidence="1">6.3.2.1</ecNumber>
    </recommendedName>
    <alternativeName>
        <fullName evidence="1">Pantoate--beta-alanine ligase</fullName>
    </alternativeName>
    <alternativeName>
        <fullName evidence="1">Pantoate-activating enzyme</fullName>
    </alternativeName>
</protein>
<sequence length="284" mass="31849">MLIIETLPLLRQHIRRLRQEGKRVALVPTMGNLHDGHMKLVDEAKARADVVIVSIFVNPMQFDRPDDLVRYPRTLQEDCEKLNKRKVDYVFAPAVEEIYPQGLEGQTYVDVPGLSTMLEGASRPGHFRGVSTIVSKLFNLIQPDIACFGEKDFQQLALIRKMVADMSYDIEIVGVPIIRAKDGLALSSRNAYLTAEQRKIAPGLYNVMNSIAEKLIAGNRELQEIIAIAEQELNEKGFRADDIQIRDADTLLELTETSKRAVILAAAWLGQARLIDNQSVTLAQ</sequence>
<reference key="1">
    <citation type="journal article" date="2004" name="Nat. Genet.">
        <title>Comparison of genome degradation in Paratyphi A and Typhi, human-restricted serovars of Salmonella enterica that cause typhoid.</title>
        <authorList>
            <person name="McClelland M."/>
            <person name="Sanderson K.E."/>
            <person name="Clifton S.W."/>
            <person name="Latreille P."/>
            <person name="Porwollik S."/>
            <person name="Sabo A."/>
            <person name="Meyer R."/>
            <person name="Bieri T."/>
            <person name="Ozersky P."/>
            <person name="McLellan M."/>
            <person name="Harkins C.R."/>
            <person name="Wang C."/>
            <person name="Nguyen C."/>
            <person name="Berghoff A."/>
            <person name="Elliott G."/>
            <person name="Kohlberg S."/>
            <person name="Strong C."/>
            <person name="Du F."/>
            <person name="Carter J."/>
            <person name="Kremizki C."/>
            <person name="Layman D."/>
            <person name="Leonard S."/>
            <person name="Sun H."/>
            <person name="Fulton L."/>
            <person name="Nash W."/>
            <person name="Miner T."/>
            <person name="Minx P."/>
            <person name="Delehaunty K."/>
            <person name="Fronick C."/>
            <person name="Magrini V."/>
            <person name="Nhan M."/>
            <person name="Warren W."/>
            <person name="Florea L."/>
            <person name="Spieth J."/>
            <person name="Wilson R.K."/>
        </authorList>
    </citation>
    <scope>NUCLEOTIDE SEQUENCE [LARGE SCALE GENOMIC DNA]</scope>
    <source>
        <strain>ATCC 9150 / SARB42</strain>
    </source>
</reference>
<dbReference type="EC" id="6.3.2.1" evidence="1"/>
<dbReference type="EMBL" id="CP000026">
    <property type="protein sequence ID" value="AAV76220.1"/>
    <property type="molecule type" value="Genomic_DNA"/>
</dbReference>
<dbReference type="RefSeq" id="WP_000905347.1">
    <property type="nucleotide sequence ID" value="NC_006511.1"/>
</dbReference>
<dbReference type="SMR" id="Q5PDB8"/>
<dbReference type="KEGG" id="spt:SPA0187"/>
<dbReference type="HOGENOM" id="CLU_047148_0_0_6"/>
<dbReference type="UniPathway" id="UPA00028">
    <property type="reaction ID" value="UER00005"/>
</dbReference>
<dbReference type="Proteomes" id="UP000008185">
    <property type="component" value="Chromosome"/>
</dbReference>
<dbReference type="GO" id="GO:0005829">
    <property type="term" value="C:cytosol"/>
    <property type="evidence" value="ECO:0007669"/>
    <property type="project" value="TreeGrafter"/>
</dbReference>
<dbReference type="GO" id="GO:0005524">
    <property type="term" value="F:ATP binding"/>
    <property type="evidence" value="ECO:0007669"/>
    <property type="project" value="UniProtKB-KW"/>
</dbReference>
<dbReference type="GO" id="GO:0004592">
    <property type="term" value="F:pantoate-beta-alanine ligase activity"/>
    <property type="evidence" value="ECO:0007669"/>
    <property type="project" value="UniProtKB-UniRule"/>
</dbReference>
<dbReference type="GO" id="GO:0015940">
    <property type="term" value="P:pantothenate biosynthetic process"/>
    <property type="evidence" value="ECO:0007669"/>
    <property type="project" value="UniProtKB-UniRule"/>
</dbReference>
<dbReference type="CDD" id="cd00560">
    <property type="entry name" value="PanC"/>
    <property type="match status" value="1"/>
</dbReference>
<dbReference type="FunFam" id="3.30.1300.10:FF:000001">
    <property type="entry name" value="Pantothenate synthetase"/>
    <property type="match status" value="1"/>
</dbReference>
<dbReference type="FunFam" id="3.40.50.620:FF:000013">
    <property type="entry name" value="Pantothenate synthetase"/>
    <property type="match status" value="1"/>
</dbReference>
<dbReference type="Gene3D" id="3.40.50.620">
    <property type="entry name" value="HUPs"/>
    <property type="match status" value="1"/>
</dbReference>
<dbReference type="Gene3D" id="3.30.1300.10">
    <property type="entry name" value="Pantoate-beta-alanine ligase, C-terminal domain"/>
    <property type="match status" value="1"/>
</dbReference>
<dbReference type="HAMAP" id="MF_00158">
    <property type="entry name" value="PanC"/>
    <property type="match status" value="1"/>
</dbReference>
<dbReference type="InterPro" id="IPR004821">
    <property type="entry name" value="Cyt_trans-like"/>
</dbReference>
<dbReference type="InterPro" id="IPR003721">
    <property type="entry name" value="Pantoate_ligase"/>
</dbReference>
<dbReference type="InterPro" id="IPR042176">
    <property type="entry name" value="Pantoate_ligase_C"/>
</dbReference>
<dbReference type="InterPro" id="IPR014729">
    <property type="entry name" value="Rossmann-like_a/b/a_fold"/>
</dbReference>
<dbReference type="NCBIfam" id="TIGR00125">
    <property type="entry name" value="cyt_tran_rel"/>
    <property type="match status" value="1"/>
</dbReference>
<dbReference type="NCBIfam" id="TIGR00018">
    <property type="entry name" value="panC"/>
    <property type="match status" value="1"/>
</dbReference>
<dbReference type="PANTHER" id="PTHR21299">
    <property type="entry name" value="CYTIDYLATE KINASE/PANTOATE-BETA-ALANINE LIGASE"/>
    <property type="match status" value="1"/>
</dbReference>
<dbReference type="PANTHER" id="PTHR21299:SF1">
    <property type="entry name" value="PANTOATE--BETA-ALANINE LIGASE"/>
    <property type="match status" value="1"/>
</dbReference>
<dbReference type="Pfam" id="PF02569">
    <property type="entry name" value="Pantoate_ligase"/>
    <property type="match status" value="1"/>
</dbReference>
<dbReference type="SUPFAM" id="SSF52374">
    <property type="entry name" value="Nucleotidylyl transferase"/>
    <property type="match status" value="1"/>
</dbReference>
<evidence type="ECO:0000255" key="1">
    <source>
        <dbReference type="HAMAP-Rule" id="MF_00158"/>
    </source>
</evidence>
<comment type="function">
    <text evidence="1">Catalyzes the condensation of pantoate with beta-alanine in an ATP-dependent reaction via a pantoyl-adenylate intermediate.</text>
</comment>
<comment type="catalytic activity">
    <reaction evidence="1">
        <text>(R)-pantoate + beta-alanine + ATP = (R)-pantothenate + AMP + diphosphate + H(+)</text>
        <dbReference type="Rhea" id="RHEA:10912"/>
        <dbReference type="ChEBI" id="CHEBI:15378"/>
        <dbReference type="ChEBI" id="CHEBI:15980"/>
        <dbReference type="ChEBI" id="CHEBI:29032"/>
        <dbReference type="ChEBI" id="CHEBI:30616"/>
        <dbReference type="ChEBI" id="CHEBI:33019"/>
        <dbReference type="ChEBI" id="CHEBI:57966"/>
        <dbReference type="ChEBI" id="CHEBI:456215"/>
        <dbReference type="EC" id="6.3.2.1"/>
    </reaction>
</comment>
<comment type="pathway">
    <text evidence="1">Cofactor biosynthesis; (R)-pantothenate biosynthesis; (R)-pantothenate from (R)-pantoate and beta-alanine: step 1/1.</text>
</comment>
<comment type="subunit">
    <text evidence="1">Homodimer.</text>
</comment>
<comment type="subcellular location">
    <subcellularLocation>
        <location evidence="1">Cytoplasm</location>
    </subcellularLocation>
</comment>
<comment type="miscellaneous">
    <text evidence="1">The reaction proceeds by a bi uni uni bi ping pong mechanism.</text>
</comment>
<comment type="similarity">
    <text evidence="1">Belongs to the pantothenate synthetase family.</text>
</comment>
<accession>Q5PDB8</accession>
<keyword id="KW-0067">ATP-binding</keyword>
<keyword id="KW-0963">Cytoplasm</keyword>
<keyword id="KW-0436">Ligase</keyword>
<keyword id="KW-0547">Nucleotide-binding</keyword>
<keyword id="KW-0566">Pantothenate biosynthesis</keyword>
<proteinExistence type="inferred from homology"/>
<gene>
    <name evidence="1" type="primary">panC</name>
    <name type="ordered locus">SPA0187</name>
</gene>
<name>PANC_SALPA</name>
<organism>
    <name type="scientific">Salmonella paratyphi A (strain ATCC 9150 / SARB42)</name>
    <dbReference type="NCBI Taxonomy" id="295319"/>
    <lineage>
        <taxon>Bacteria</taxon>
        <taxon>Pseudomonadati</taxon>
        <taxon>Pseudomonadota</taxon>
        <taxon>Gammaproteobacteria</taxon>
        <taxon>Enterobacterales</taxon>
        <taxon>Enterobacteriaceae</taxon>
        <taxon>Salmonella</taxon>
    </lineage>
</organism>
<feature type="chain" id="PRO_0000128264" description="Pantothenate synthetase">
    <location>
        <begin position="1"/>
        <end position="284"/>
    </location>
</feature>
<feature type="active site" description="Proton donor" evidence="1">
    <location>
        <position position="37"/>
    </location>
</feature>
<feature type="binding site" evidence="1">
    <location>
        <begin position="30"/>
        <end position="37"/>
    </location>
    <ligand>
        <name>ATP</name>
        <dbReference type="ChEBI" id="CHEBI:30616"/>
    </ligand>
</feature>
<feature type="binding site" evidence="1">
    <location>
        <position position="61"/>
    </location>
    <ligand>
        <name>(R)-pantoate</name>
        <dbReference type="ChEBI" id="CHEBI:15980"/>
    </ligand>
</feature>
<feature type="binding site" evidence="1">
    <location>
        <position position="61"/>
    </location>
    <ligand>
        <name>beta-alanine</name>
        <dbReference type="ChEBI" id="CHEBI:57966"/>
    </ligand>
</feature>
<feature type="binding site" evidence="1">
    <location>
        <begin position="149"/>
        <end position="152"/>
    </location>
    <ligand>
        <name>ATP</name>
        <dbReference type="ChEBI" id="CHEBI:30616"/>
    </ligand>
</feature>
<feature type="binding site" evidence="1">
    <location>
        <position position="155"/>
    </location>
    <ligand>
        <name>(R)-pantoate</name>
        <dbReference type="ChEBI" id="CHEBI:15980"/>
    </ligand>
</feature>
<feature type="binding site" evidence="1">
    <location>
        <position position="178"/>
    </location>
    <ligand>
        <name>ATP</name>
        <dbReference type="ChEBI" id="CHEBI:30616"/>
    </ligand>
</feature>
<feature type="binding site" evidence="1">
    <location>
        <begin position="186"/>
        <end position="189"/>
    </location>
    <ligand>
        <name>ATP</name>
        <dbReference type="ChEBI" id="CHEBI:30616"/>
    </ligand>
</feature>